<reference key="1">
    <citation type="journal article" date="1996" name="Mol. Biol. Evol.">
        <title>Molecular phylogeny and genome evolution in the Drosophila virilis species group: duplications of the alcohol dehydrogenase gene.</title>
        <authorList>
            <person name="Nurminsky D.I."/>
            <person name="Moriyama E.N."/>
            <person name="Lozovskaya E.R."/>
            <person name="Hartl D.L."/>
        </authorList>
    </citation>
    <scope>NUCLEOTIDE SEQUENCE [GENOMIC DNA]</scope>
</reference>
<accession>Q27404</accession>
<comment type="catalytic activity">
    <reaction evidence="2">
        <text>a primary alcohol + NAD(+) = an aldehyde + NADH + H(+)</text>
        <dbReference type="Rhea" id="RHEA:10736"/>
        <dbReference type="ChEBI" id="CHEBI:15378"/>
        <dbReference type="ChEBI" id="CHEBI:15734"/>
        <dbReference type="ChEBI" id="CHEBI:17478"/>
        <dbReference type="ChEBI" id="CHEBI:57540"/>
        <dbReference type="ChEBI" id="CHEBI:57945"/>
        <dbReference type="EC" id="1.1.1.1"/>
    </reaction>
</comment>
<comment type="catalytic activity">
    <reaction evidence="2">
        <text>a secondary alcohol + NAD(+) = a ketone + NADH + H(+)</text>
        <dbReference type="Rhea" id="RHEA:10740"/>
        <dbReference type="ChEBI" id="CHEBI:15378"/>
        <dbReference type="ChEBI" id="CHEBI:17087"/>
        <dbReference type="ChEBI" id="CHEBI:35681"/>
        <dbReference type="ChEBI" id="CHEBI:57540"/>
        <dbReference type="ChEBI" id="CHEBI:57945"/>
        <dbReference type="EC" id="1.1.1.1"/>
    </reaction>
</comment>
<comment type="subunit">
    <text>Homodimer.</text>
</comment>
<comment type="similarity">
    <text evidence="3">Belongs to the short-chain dehydrogenases/reductases (SDR) family.</text>
</comment>
<name>ADH_DROLA</name>
<organism>
    <name type="scientific">Drosophila lacicola</name>
    <name type="common">Fruit fly</name>
    <dbReference type="NCBI Taxonomy" id="40369"/>
    <lineage>
        <taxon>Eukaryota</taxon>
        <taxon>Metazoa</taxon>
        <taxon>Ecdysozoa</taxon>
        <taxon>Arthropoda</taxon>
        <taxon>Hexapoda</taxon>
        <taxon>Insecta</taxon>
        <taxon>Pterygota</taxon>
        <taxon>Neoptera</taxon>
        <taxon>Endopterygota</taxon>
        <taxon>Diptera</taxon>
        <taxon>Brachycera</taxon>
        <taxon>Muscomorpha</taxon>
        <taxon>Ephydroidea</taxon>
        <taxon>Drosophilidae</taxon>
        <taxon>Drosophila</taxon>
    </lineage>
</organism>
<sequence>MAIANKNIIFVAGLGGIGLDTSREIVKSGPKNLVILDRIDNPTAIAELKAINPKVTVTFYPYDVTVPVAETTKLLKTIFAQLKTVDLLINGAGILDDHQIERTIAVNFTGTVNTTTAIMEFWDKRKGGPGGVVANICSVTGFNAIYQVPVYSASKAAALSFTNSLARLAPITGVTAYSINPGITRTPLVHKFNSWLDVEPRVGELLLEHPTQTTLECAQNFVKAIEANKNGAIWQLDLGQLIAVEWTKHWDSHI</sequence>
<dbReference type="EC" id="1.1.1.1"/>
<dbReference type="EMBL" id="U26840">
    <property type="protein sequence ID" value="AAB02626.1"/>
    <property type="molecule type" value="Genomic_DNA"/>
</dbReference>
<dbReference type="EMBL" id="U26841">
    <property type="protein sequence ID" value="AAB02627.1"/>
    <property type="molecule type" value="Genomic_DNA"/>
</dbReference>
<dbReference type="SMR" id="Q27404"/>
<dbReference type="GO" id="GO:0005737">
    <property type="term" value="C:cytoplasm"/>
    <property type="evidence" value="ECO:0007669"/>
    <property type="project" value="TreeGrafter"/>
</dbReference>
<dbReference type="GO" id="GO:0004022">
    <property type="term" value="F:alcohol dehydrogenase (NAD+) activity"/>
    <property type="evidence" value="ECO:0000250"/>
    <property type="project" value="UniProtKB"/>
</dbReference>
<dbReference type="GO" id="GO:0006066">
    <property type="term" value="P:alcohol metabolic process"/>
    <property type="evidence" value="ECO:0007669"/>
    <property type="project" value="InterPro"/>
</dbReference>
<dbReference type="CDD" id="cd05323">
    <property type="entry name" value="ADH_SDR_c_like"/>
    <property type="match status" value="1"/>
</dbReference>
<dbReference type="FunFam" id="3.40.50.720:FF:000302">
    <property type="entry name" value="Alcohol dehydrogenase"/>
    <property type="match status" value="1"/>
</dbReference>
<dbReference type="Gene3D" id="3.40.50.720">
    <property type="entry name" value="NAD(P)-binding Rossmann-like Domain"/>
    <property type="match status" value="1"/>
</dbReference>
<dbReference type="InterPro" id="IPR002425">
    <property type="entry name" value="ADH_Drosophila-type"/>
</dbReference>
<dbReference type="InterPro" id="IPR036291">
    <property type="entry name" value="NAD(P)-bd_dom_sf"/>
</dbReference>
<dbReference type="InterPro" id="IPR020904">
    <property type="entry name" value="Sc_DH/Rdtase_CS"/>
</dbReference>
<dbReference type="InterPro" id="IPR002347">
    <property type="entry name" value="SDR_fam"/>
</dbReference>
<dbReference type="PANTHER" id="PTHR44229">
    <property type="entry name" value="15-HYDROXYPROSTAGLANDIN DEHYDROGENASE [NAD(+)]"/>
    <property type="match status" value="1"/>
</dbReference>
<dbReference type="PANTHER" id="PTHR44229:SF8">
    <property type="entry name" value="ALCOHOL DEHYDROGENASE-RELATED"/>
    <property type="match status" value="1"/>
</dbReference>
<dbReference type="Pfam" id="PF00106">
    <property type="entry name" value="adh_short"/>
    <property type="match status" value="1"/>
</dbReference>
<dbReference type="PRINTS" id="PR01168">
    <property type="entry name" value="ALCDHDRGNASE"/>
</dbReference>
<dbReference type="PRINTS" id="PR01167">
    <property type="entry name" value="INSADHFAMILY"/>
</dbReference>
<dbReference type="PRINTS" id="PR00080">
    <property type="entry name" value="SDRFAMILY"/>
</dbReference>
<dbReference type="SUPFAM" id="SSF51735">
    <property type="entry name" value="NAD(P)-binding Rossmann-fold domains"/>
    <property type="match status" value="1"/>
</dbReference>
<dbReference type="PROSITE" id="PS00061">
    <property type="entry name" value="ADH_SHORT"/>
    <property type="match status" value="1"/>
</dbReference>
<protein>
    <recommendedName>
        <fullName>Alcohol dehydrogenase</fullName>
        <ecNumber>1.1.1.1</ecNumber>
    </recommendedName>
</protein>
<feature type="chain" id="PRO_0000054470" description="Alcohol dehydrogenase">
    <location>
        <begin position="1"/>
        <end position="254"/>
    </location>
</feature>
<feature type="active site" description="Proton acceptor" evidence="2">
    <location>
        <position position="151"/>
    </location>
</feature>
<feature type="binding site" evidence="1">
    <location>
        <begin position="10"/>
        <end position="33"/>
    </location>
    <ligand>
        <name>NAD(+)</name>
        <dbReference type="ChEBI" id="CHEBI:57540"/>
    </ligand>
</feature>
<feature type="binding site" evidence="1">
    <location>
        <position position="138"/>
    </location>
    <ligand>
        <name>substrate</name>
    </ligand>
</feature>
<evidence type="ECO:0000250" key="1"/>
<evidence type="ECO:0000255" key="2">
    <source>
        <dbReference type="PROSITE-ProRule" id="PRU10001"/>
    </source>
</evidence>
<evidence type="ECO:0000305" key="3"/>
<gene>
    <name type="primary">Adh1</name>
    <name type="synonym">Adh-1</name>
</gene>
<gene>
    <name type="primary">Adh2</name>
    <name type="synonym">Adh-2</name>
</gene>
<keyword id="KW-0520">NAD</keyword>
<keyword id="KW-0560">Oxidoreductase</keyword>
<proteinExistence type="inferred from homology"/>